<proteinExistence type="evidence at protein level"/>
<feature type="transit peptide" description="Mitochondrion" evidence="1">
    <location>
        <begin position="1"/>
        <end position="35"/>
    </location>
</feature>
<feature type="chain" id="PRO_0000249226" description="Small ribosomal subunit protein bTHXm">
    <location>
        <begin position="36"/>
        <end position="98"/>
    </location>
</feature>
<feature type="region of interest" description="Disordered" evidence="2">
    <location>
        <begin position="52"/>
        <end position="71"/>
    </location>
</feature>
<feature type="compositionally biased region" description="Basic residues" evidence="2">
    <location>
        <begin position="53"/>
        <end position="62"/>
    </location>
</feature>
<dbReference type="EMBL" id="AC006841">
    <property type="protein sequence ID" value="AAD23677.1"/>
    <property type="molecule type" value="Genomic_DNA"/>
</dbReference>
<dbReference type="EMBL" id="CP002685">
    <property type="protein sequence ID" value="AEC07156.1"/>
    <property type="molecule type" value="Genomic_DNA"/>
</dbReference>
<dbReference type="EMBL" id="BT000022">
    <property type="protein sequence ID" value="AAN15341.1"/>
    <property type="molecule type" value="mRNA"/>
</dbReference>
<dbReference type="EMBL" id="AY072314">
    <property type="protein sequence ID" value="AAL61921.1"/>
    <property type="molecule type" value="mRNA"/>
</dbReference>
<dbReference type="EMBL" id="AF324697">
    <property type="protein sequence ID" value="AAG40048.1"/>
    <property type="molecule type" value="mRNA"/>
</dbReference>
<dbReference type="EMBL" id="AF339729">
    <property type="protein sequence ID" value="AAK00411.1"/>
    <property type="molecule type" value="mRNA"/>
</dbReference>
<dbReference type="PIR" id="E84599">
    <property type="entry name" value="E84599"/>
</dbReference>
<dbReference type="RefSeq" id="NP_565506.1">
    <property type="nucleotide sequence ID" value="NM_127701.3"/>
</dbReference>
<dbReference type="PDB" id="6XYW">
    <property type="method" value="EM"/>
    <property type="resolution" value="3.86 A"/>
    <property type="chains" value="Bt=1-98"/>
</dbReference>
<dbReference type="PDBsum" id="6XYW"/>
<dbReference type="EMDB" id="EMD-10654"/>
<dbReference type="SMR" id="Q9SJU8"/>
<dbReference type="FunCoup" id="Q9SJU8">
    <property type="interactions" value="234"/>
</dbReference>
<dbReference type="IntAct" id="Q9SJU8">
    <property type="interactions" value="1"/>
</dbReference>
<dbReference type="STRING" id="3702.Q9SJU8"/>
<dbReference type="PaxDb" id="3702-AT2G21290.1"/>
<dbReference type="ProteomicsDB" id="226674"/>
<dbReference type="EnsemblPlants" id="AT2G21290.1">
    <property type="protein sequence ID" value="AT2G21290.1"/>
    <property type="gene ID" value="AT2G21290"/>
</dbReference>
<dbReference type="GeneID" id="816668"/>
<dbReference type="Gramene" id="AT2G21290.1">
    <property type="protein sequence ID" value="AT2G21290.1"/>
    <property type="gene ID" value="AT2G21290"/>
</dbReference>
<dbReference type="KEGG" id="ath:AT2G21290"/>
<dbReference type="Araport" id="AT2G21290"/>
<dbReference type="TAIR" id="AT2G21290"/>
<dbReference type="eggNOG" id="ENOG502S834">
    <property type="taxonomic scope" value="Eukaryota"/>
</dbReference>
<dbReference type="HOGENOM" id="CLU_154125_1_0_1"/>
<dbReference type="InParanoid" id="Q9SJU8"/>
<dbReference type="OMA" id="WCSSMTR"/>
<dbReference type="OrthoDB" id="911986at2759"/>
<dbReference type="PhylomeDB" id="Q9SJU8"/>
<dbReference type="PRO" id="PR:Q9SJU8"/>
<dbReference type="Proteomes" id="UP000006548">
    <property type="component" value="Chromosome 2"/>
</dbReference>
<dbReference type="ExpressionAtlas" id="Q9SJU8">
    <property type="expression patterns" value="baseline and differential"/>
</dbReference>
<dbReference type="GO" id="GO:0005739">
    <property type="term" value="C:mitochondrion"/>
    <property type="evidence" value="ECO:0007669"/>
    <property type="project" value="UniProtKB-SubCell"/>
</dbReference>
<dbReference type="GO" id="GO:1990904">
    <property type="term" value="C:ribonucleoprotein complex"/>
    <property type="evidence" value="ECO:0007669"/>
    <property type="project" value="UniProtKB-KW"/>
</dbReference>
<dbReference type="GO" id="GO:0005840">
    <property type="term" value="C:ribosome"/>
    <property type="evidence" value="ECO:0007669"/>
    <property type="project" value="UniProtKB-KW"/>
</dbReference>
<dbReference type="InterPro" id="IPR030826">
    <property type="entry name" value="Ribosomal_bTHX/bTHXc/bTHXm"/>
</dbReference>
<dbReference type="InterPro" id="IPR044695">
    <property type="entry name" value="Ribosomal_bTHXc/bTHXc_plant"/>
</dbReference>
<dbReference type="NCBIfam" id="TIGR04560">
    <property type="entry name" value="ribo_THX"/>
    <property type="match status" value="1"/>
</dbReference>
<dbReference type="PANTHER" id="PTHR34550">
    <property type="entry name" value="30S RIBOSOMAL PROTEIN S31, CHLOROPLASTIC"/>
    <property type="match status" value="1"/>
</dbReference>
<dbReference type="PANTHER" id="PTHR34550:SF3">
    <property type="entry name" value="SMALL RIBOSOMAL SUBUNIT PROTEIN BTHXM"/>
    <property type="match status" value="1"/>
</dbReference>
<dbReference type="Pfam" id="PF17067">
    <property type="entry name" value="RPS31"/>
    <property type="match status" value="1"/>
</dbReference>
<name>RT31_ARATH</name>
<sequence>MAAMQWCGAMTRRIMMTQRTSAALNCSARYSSLSPACAAPAVSEMDLCGRGDKKTKKGKRFKGSYGNSRGKKQKMIERIKDKLELPRSTPWPLPFKLI</sequence>
<comment type="subunit">
    <text evidence="4">Component of the mitochondrial ribosome small subunit.</text>
</comment>
<comment type="subcellular location">
    <subcellularLocation>
        <location evidence="3 4">Mitochondrion</location>
    </subcellularLocation>
</comment>
<comment type="similarity">
    <text evidence="4">Belongs to the bacterial ribosomal protein bTHX family.</text>
</comment>
<reference key="1">
    <citation type="journal article" date="1999" name="Nature">
        <title>Sequence and analysis of chromosome 2 of the plant Arabidopsis thaliana.</title>
        <authorList>
            <person name="Lin X."/>
            <person name="Kaul S."/>
            <person name="Rounsley S.D."/>
            <person name="Shea T.P."/>
            <person name="Benito M.-I."/>
            <person name="Town C.D."/>
            <person name="Fujii C.Y."/>
            <person name="Mason T.M."/>
            <person name="Bowman C.L."/>
            <person name="Barnstead M.E."/>
            <person name="Feldblyum T.V."/>
            <person name="Buell C.R."/>
            <person name="Ketchum K.A."/>
            <person name="Lee J.J."/>
            <person name="Ronning C.M."/>
            <person name="Koo H.L."/>
            <person name="Moffat K.S."/>
            <person name="Cronin L.A."/>
            <person name="Shen M."/>
            <person name="Pai G."/>
            <person name="Van Aken S."/>
            <person name="Umayam L."/>
            <person name="Tallon L.J."/>
            <person name="Gill J.E."/>
            <person name="Adams M.D."/>
            <person name="Carrera A.J."/>
            <person name="Creasy T.H."/>
            <person name="Goodman H.M."/>
            <person name="Somerville C.R."/>
            <person name="Copenhaver G.P."/>
            <person name="Preuss D."/>
            <person name="Nierman W.C."/>
            <person name="White O."/>
            <person name="Eisen J.A."/>
            <person name="Salzberg S.L."/>
            <person name="Fraser C.M."/>
            <person name="Venter J.C."/>
        </authorList>
    </citation>
    <scope>NUCLEOTIDE SEQUENCE [LARGE SCALE GENOMIC DNA]</scope>
    <source>
        <strain>cv. Columbia</strain>
    </source>
</reference>
<reference key="2">
    <citation type="journal article" date="2017" name="Plant J.">
        <title>Araport11: a complete reannotation of the Arabidopsis thaliana reference genome.</title>
        <authorList>
            <person name="Cheng C.Y."/>
            <person name="Krishnakumar V."/>
            <person name="Chan A.P."/>
            <person name="Thibaud-Nissen F."/>
            <person name="Schobel S."/>
            <person name="Town C.D."/>
        </authorList>
    </citation>
    <scope>GENOME REANNOTATION</scope>
    <source>
        <strain>cv. Columbia</strain>
    </source>
</reference>
<reference key="3">
    <citation type="journal article" date="2003" name="Science">
        <title>Empirical analysis of transcriptional activity in the Arabidopsis genome.</title>
        <authorList>
            <person name="Yamada K."/>
            <person name="Lim J."/>
            <person name="Dale J.M."/>
            <person name="Chen H."/>
            <person name="Shinn P."/>
            <person name="Palm C.J."/>
            <person name="Southwick A.M."/>
            <person name="Wu H.C."/>
            <person name="Kim C.J."/>
            <person name="Nguyen M."/>
            <person name="Pham P.K."/>
            <person name="Cheuk R.F."/>
            <person name="Karlin-Newmann G."/>
            <person name="Liu S.X."/>
            <person name="Lam B."/>
            <person name="Sakano H."/>
            <person name="Wu T."/>
            <person name="Yu G."/>
            <person name="Miranda M."/>
            <person name="Quach H.L."/>
            <person name="Tripp M."/>
            <person name="Chang C.H."/>
            <person name="Lee J.M."/>
            <person name="Toriumi M.J."/>
            <person name="Chan M.M."/>
            <person name="Tang C.C."/>
            <person name="Onodera C.S."/>
            <person name="Deng J.M."/>
            <person name="Akiyama K."/>
            <person name="Ansari Y."/>
            <person name="Arakawa T."/>
            <person name="Banh J."/>
            <person name="Banno F."/>
            <person name="Bowser L."/>
            <person name="Brooks S.Y."/>
            <person name="Carninci P."/>
            <person name="Chao Q."/>
            <person name="Choy N."/>
            <person name="Enju A."/>
            <person name="Goldsmith A.D."/>
            <person name="Gurjal M."/>
            <person name="Hansen N.F."/>
            <person name="Hayashizaki Y."/>
            <person name="Johnson-Hopson C."/>
            <person name="Hsuan V.W."/>
            <person name="Iida K."/>
            <person name="Karnes M."/>
            <person name="Khan S."/>
            <person name="Koesema E."/>
            <person name="Ishida J."/>
            <person name="Jiang P.X."/>
            <person name="Jones T."/>
            <person name="Kawai J."/>
            <person name="Kamiya A."/>
            <person name="Meyers C."/>
            <person name="Nakajima M."/>
            <person name="Narusaka M."/>
            <person name="Seki M."/>
            <person name="Sakurai T."/>
            <person name="Satou M."/>
            <person name="Tamse R."/>
            <person name="Vaysberg M."/>
            <person name="Wallender E.K."/>
            <person name="Wong C."/>
            <person name="Yamamura Y."/>
            <person name="Yuan S."/>
            <person name="Shinozaki K."/>
            <person name="Davis R.W."/>
            <person name="Theologis A."/>
            <person name="Ecker J.R."/>
        </authorList>
    </citation>
    <scope>NUCLEOTIDE SEQUENCE [LARGE SCALE MRNA]</scope>
    <source>
        <strain>cv. Columbia</strain>
    </source>
</reference>
<reference key="4">
    <citation type="journal article" date="2023" name="Plant Cell">
        <title>An updated nomenclature for plant ribosomal protein genes.</title>
        <authorList>
            <person name="Scarpin M.R."/>
            <person name="Busche M."/>
            <person name="Martinez R.E."/>
            <person name="Harper L.C."/>
            <person name="Reiser L."/>
            <person name="Szakonyi D."/>
            <person name="Merchante C."/>
            <person name="Lan T."/>
            <person name="Xiong W."/>
            <person name="Mo B."/>
            <person name="Tang G."/>
            <person name="Chen X."/>
            <person name="Bailey-Serres J."/>
            <person name="Browning K.S."/>
            <person name="Brunkard J.O."/>
        </authorList>
    </citation>
    <scope>NOMENCLATURE</scope>
</reference>
<gene>
    <name type="ordered locus">At2g21290</name>
    <name type="ORF">F3K23.5</name>
</gene>
<evidence type="ECO:0000255" key="1"/>
<evidence type="ECO:0000256" key="2">
    <source>
        <dbReference type="SAM" id="MobiDB-lite"/>
    </source>
</evidence>
<evidence type="ECO:0000303" key="3">
    <source>
    </source>
</evidence>
<evidence type="ECO:0000305" key="4"/>
<accession>Q9SJU8</accession>
<organism>
    <name type="scientific">Arabidopsis thaliana</name>
    <name type="common">Mouse-ear cress</name>
    <dbReference type="NCBI Taxonomy" id="3702"/>
    <lineage>
        <taxon>Eukaryota</taxon>
        <taxon>Viridiplantae</taxon>
        <taxon>Streptophyta</taxon>
        <taxon>Embryophyta</taxon>
        <taxon>Tracheophyta</taxon>
        <taxon>Spermatophyta</taxon>
        <taxon>Magnoliopsida</taxon>
        <taxon>eudicotyledons</taxon>
        <taxon>Gunneridae</taxon>
        <taxon>Pentapetalae</taxon>
        <taxon>rosids</taxon>
        <taxon>malvids</taxon>
        <taxon>Brassicales</taxon>
        <taxon>Brassicaceae</taxon>
        <taxon>Camelineae</taxon>
        <taxon>Arabidopsis</taxon>
    </lineage>
</organism>
<keyword id="KW-0002">3D-structure</keyword>
<keyword id="KW-0496">Mitochondrion</keyword>
<keyword id="KW-1185">Reference proteome</keyword>
<keyword id="KW-0687">Ribonucleoprotein</keyword>
<keyword id="KW-0689">Ribosomal protein</keyword>
<keyword id="KW-0809">Transit peptide</keyword>
<protein>
    <recommendedName>
        <fullName evidence="3">Small ribosomal subunit protein bTHXm</fullName>
    </recommendedName>
    <alternativeName>
        <fullName>30S ribosomal protein S31, mitochondrial</fullName>
    </alternativeName>
</protein>